<comment type="function">
    <text evidence="1">Component of the 26S proteasome, a multiprotein complex involved in the ATP-dependent degradation of ubiquitinated proteins. This complex plays a key role in the maintenance of protein homeostasis by removing misfolded or damaged proteins, which could impair cellular functions, and by removing proteins whose functions are no longer required. Therefore, the proteasome participates in numerous cellular processes, including cell cycle progression, apoptosis, or DNA damage repair. The PSMD14 subunit is a metalloprotease that specifically cleaves 'Lys-63'-linked polyubiquitin chains within the complex. Plays a role in response to double-strand breaks (DSBs): acts as a regulator of non-homologous end joining (NHEJ) by cleaving 'Lys-63'-linked polyubiquitin, thereby promoting retention of JMJD2A/KDM4A on chromatin and restricting TP53BP1 accumulation. Also involved in homologous recombination repair by promoting RAD51 loading.</text>
</comment>
<comment type="subunit">
    <text evidence="1">Component of the 19S proteasome regulatory particle complex. The 26S proteasome consists of a 20S core particle (CP) and two 19S regulatory subunits (RP). The regulatory particle is made of a lid composed of 9 subunits including PSMD4, a base containing 6 ATPases and few additional components. Within the complex, PSMD4 interacts with subunit PSMD7 through their respective MPN domain. Interacts with TXNL1.</text>
</comment>
<comment type="interaction">
    <interactant intactId="EBI-772796">
        <id>O35593</id>
    </interactant>
    <interactant intactId="EBI-954387">
        <id>Q16186</id>
        <label>ADRM1</label>
    </interactant>
    <organismsDiffer>true</organismsDiffer>
    <experiments>2</experiments>
</comment>
<comment type="similarity">
    <text evidence="3">Belongs to the peptidase M67A family. PSMD14 subfamily.</text>
</comment>
<feature type="chain" id="PRO_0000213953" description="26S proteasome non-ATPase regulatory subunit 14">
    <location>
        <begin position="1"/>
        <end position="310"/>
    </location>
</feature>
<feature type="domain" description="MPN" evidence="2">
    <location>
        <begin position="31"/>
        <end position="166"/>
    </location>
</feature>
<feature type="short sequence motif" description="JAMM motif" evidence="2">
    <location>
        <begin position="113"/>
        <end position="126"/>
    </location>
</feature>
<feature type="binding site" evidence="2">
    <location>
        <position position="113"/>
    </location>
    <ligand>
        <name>Zn(2+)</name>
        <dbReference type="ChEBI" id="CHEBI:29105"/>
        <note>catalytic</note>
    </ligand>
</feature>
<feature type="binding site" evidence="2">
    <location>
        <position position="115"/>
    </location>
    <ligand>
        <name>Zn(2+)</name>
        <dbReference type="ChEBI" id="CHEBI:29105"/>
        <note>catalytic</note>
    </ligand>
</feature>
<feature type="binding site" evidence="2">
    <location>
        <position position="126"/>
    </location>
    <ligand>
        <name>Zn(2+)</name>
        <dbReference type="ChEBI" id="CHEBI:29105"/>
        <note>catalytic</note>
    </ligand>
</feature>
<feature type="modified residue" description="Phosphoserine" evidence="1">
    <location>
        <position position="150"/>
    </location>
</feature>
<feature type="modified residue" description="Phosphoserine" evidence="1">
    <location>
        <position position="224"/>
    </location>
</feature>
<feature type="modified residue" description="Phosphothreonine" evidence="1">
    <location>
        <position position="266"/>
    </location>
</feature>
<feature type="sequence conflict" description="In Ref. 1; CAA73514." evidence="3" ref="1">
    <original>GQG</original>
    <variation>AR</variation>
    <location>
        <begin position="15"/>
        <end position="17"/>
    </location>
</feature>
<organism>
    <name type="scientific">Mus musculus</name>
    <name type="common">Mouse</name>
    <dbReference type="NCBI Taxonomy" id="10090"/>
    <lineage>
        <taxon>Eukaryota</taxon>
        <taxon>Metazoa</taxon>
        <taxon>Chordata</taxon>
        <taxon>Craniata</taxon>
        <taxon>Vertebrata</taxon>
        <taxon>Euteleostomi</taxon>
        <taxon>Mammalia</taxon>
        <taxon>Eutheria</taxon>
        <taxon>Euarchontoglires</taxon>
        <taxon>Glires</taxon>
        <taxon>Rodentia</taxon>
        <taxon>Myomorpha</taxon>
        <taxon>Muroidea</taxon>
        <taxon>Muridae</taxon>
        <taxon>Murinae</taxon>
        <taxon>Mus</taxon>
        <taxon>Mus</taxon>
    </lineage>
</organism>
<keyword id="KW-0903">Direct protein sequencing</keyword>
<keyword id="KW-0227">DNA damage</keyword>
<keyword id="KW-0234">DNA repair</keyword>
<keyword id="KW-0378">Hydrolase</keyword>
<keyword id="KW-0479">Metal-binding</keyword>
<keyword id="KW-0482">Metalloprotease</keyword>
<keyword id="KW-0597">Phosphoprotein</keyword>
<keyword id="KW-0645">Protease</keyword>
<keyword id="KW-0647">Proteasome</keyword>
<keyword id="KW-1185">Reference proteome</keyword>
<keyword id="KW-0833">Ubl conjugation pathway</keyword>
<keyword id="KW-0862">Zinc</keyword>
<accession>O35593</accession>
<accession>Q3UB50</accession>
<accession>Q9CZY6</accession>
<sequence>MDRLLRLGGGMPGLGQGPPTDAPAVDTAEQVYISSLALLKMLKHGRAGVPMEVMGLMLGEFVDDYTVRVIDVFAMPQSGTGVSVEAVDPVFQAKMLDMLKQTGRPEMVVGWYHSHPGFGCWLSGVDINTQQSFEALSERAVAVVVDPIQSVKGKVVIDAFRLINANMMVLGHEPRQTTSNLGHLNKPSIQALIHGLNRHYYSITINYRKNELEQKMLLNLHKKSWMEGLTLQDYSEHCKHNESVVKEMLELAKNYNKAVEEEDKMTPEQLAIKNVGKQDPKRHLEEHVDVLMTSNIVQCLAAMLDTVVFK</sequence>
<gene>
    <name type="primary">Psmd14</name>
    <name type="synonym">Pad1</name>
</gene>
<protein>
    <recommendedName>
        <fullName>26S proteasome non-ATPase regulatory subunit 14</fullName>
        <ecNumber>3.4.19.-</ecNumber>
    </recommendedName>
    <alternativeName>
        <fullName>26S proteasome regulatory subunit RPN11</fullName>
    </alternativeName>
    <alternativeName>
        <fullName>MAD1</fullName>
    </alternativeName>
</protein>
<name>PSDE_MOUSE</name>
<reference key="1">
    <citation type="journal article" date="1998" name="J. Biol. Chem.">
        <title>The pad1+ gene encodes a subunit of the 26 S proteasome in fission yeast.</title>
        <authorList>
            <person name="Penney M."/>
            <person name="Wilkinson C."/>
            <person name="Wallace M."/>
            <person name="Javerzat J.-P."/>
            <person name="Ferrell K."/>
            <person name="Seeger M."/>
            <person name="Dubiel W."/>
            <person name="McKay S."/>
            <person name="Allshire R."/>
            <person name="Gordon C."/>
        </authorList>
    </citation>
    <scope>NUCLEOTIDE SEQUENCE [MRNA]</scope>
</reference>
<reference key="2">
    <citation type="journal article" date="2005" name="Science">
        <title>The transcriptional landscape of the mammalian genome.</title>
        <authorList>
            <person name="Carninci P."/>
            <person name="Kasukawa T."/>
            <person name="Katayama S."/>
            <person name="Gough J."/>
            <person name="Frith M.C."/>
            <person name="Maeda N."/>
            <person name="Oyama R."/>
            <person name="Ravasi T."/>
            <person name="Lenhard B."/>
            <person name="Wells C."/>
            <person name="Kodzius R."/>
            <person name="Shimokawa K."/>
            <person name="Bajic V.B."/>
            <person name="Brenner S.E."/>
            <person name="Batalov S."/>
            <person name="Forrest A.R."/>
            <person name="Zavolan M."/>
            <person name="Davis M.J."/>
            <person name="Wilming L.G."/>
            <person name="Aidinis V."/>
            <person name="Allen J.E."/>
            <person name="Ambesi-Impiombato A."/>
            <person name="Apweiler R."/>
            <person name="Aturaliya R.N."/>
            <person name="Bailey T.L."/>
            <person name="Bansal M."/>
            <person name="Baxter L."/>
            <person name="Beisel K.W."/>
            <person name="Bersano T."/>
            <person name="Bono H."/>
            <person name="Chalk A.M."/>
            <person name="Chiu K.P."/>
            <person name="Choudhary V."/>
            <person name="Christoffels A."/>
            <person name="Clutterbuck D.R."/>
            <person name="Crowe M.L."/>
            <person name="Dalla E."/>
            <person name="Dalrymple B.P."/>
            <person name="de Bono B."/>
            <person name="Della Gatta G."/>
            <person name="di Bernardo D."/>
            <person name="Down T."/>
            <person name="Engstrom P."/>
            <person name="Fagiolini M."/>
            <person name="Faulkner G."/>
            <person name="Fletcher C.F."/>
            <person name="Fukushima T."/>
            <person name="Furuno M."/>
            <person name="Futaki S."/>
            <person name="Gariboldi M."/>
            <person name="Georgii-Hemming P."/>
            <person name="Gingeras T.R."/>
            <person name="Gojobori T."/>
            <person name="Green R.E."/>
            <person name="Gustincich S."/>
            <person name="Harbers M."/>
            <person name="Hayashi Y."/>
            <person name="Hensch T.K."/>
            <person name="Hirokawa N."/>
            <person name="Hill D."/>
            <person name="Huminiecki L."/>
            <person name="Iacono M."/>
            <person name="Ikeo K."/>
            <person name="Iwama A."/>
            <person name="Ishikawa T."/>
            <person name="Jakt M."/>
            <person name="Kanapin A."/>
            <person name="Katoh M."/>
            <person name="Kawasawa Y."/>
            <person name="Kelso J."/>
            <person name="Kitamura H."/>
            <person name="Kitano H."/>
            <person name="Kollias G."/>
            <person name="Krishnan S.P."/>
            <person name="Kruger A."/>
            <person name="Kummerfeld S.K."/>
            <person name="Kurochkin I.V."/>
            <person name="Lareau L.F."/>
            <person name="Lazarevic D."/>
            <person name="Lipovich L."/>
            <person name="Liu J."/>
            <person name="Liuni S."/>
            <person name="McWilliam S."/>
            <person name="Madan Babu M."/>
            <person name="Madera M."/>
            <person name="Marchionni L."/>
            <person name="Matsuda H."/>
            <person name="Matsuzawa S."/>
            <person name="Miki H."/>
            <person name="Mignone F."/>
            <person name="Miyake S."/>
            <person name="Morris K."/>
            <person name="Mottagui-Tabar S."/>
            <person name="Mulder N."/>
            <person name="Nakano N."/>
            <person name="Nakauchi H."/>
            <person name="Ng P."/>
            <person name="Nilsson R."/>
            <person name="Nishiguchi S."/>
            <person name="Nishikawa S."/>
            <person name="Nori F."/>
            <person name="Ohara O."/>
            <person name="Okazaki Y."/>
            <person name="Orlando V."/>
            <person name="Pang K.C."/>
            <person name="Pavan W.J."/>
            <person name="Pavesi G."/>
            <person name="Pesole G."/>
            <person name="Petrovsky N."/>
            <person name="Piazza S."/>
            <person name="Reed J."/>
            <person name="Reid J.F."/>
            <person name="Ring B.Z."/>
            <person name="Ringwald M."/>
            <person name="Rost B."/>
            <person name="Ruan Y."/>
            <person name="Salzberg S.L."/>
            <person name="Sandelin A."/>
            <person name="Schneider C."/>
            <person name="Schoenbach C."/>
            <person name="Sekiguchi K."/>
            <person name="Semple C.A."/>
            <person name="Seno S."/>
            <person name="Sessa L."/>
            <person name="Sheng Y."/>
            <person name="Shibata Y."/>
            <person name="Shimada H."/>
            <person name="Shimada K."/>
            <person name="Silva D."/>
            <person name="Sinclair B."/>
            <person name="Sperling S."/>
            <person name="Stupka E."/>
            <person name="Sugiura K."/>
            <person name="Sultana R."/>
            <person name="Takenaka Y."/>
            <person name="Taki K."/>
            <person name="Tammoja K."/>
            <person name="Tan S.L."/>
            <person name="Tang S."/>
            <person name="Taylor M.S."/>
            <person name="Tegner J."/>
            <person name="Teichmann S.A."/>
            <person name="Ueda H.R."/>
            <person name="van Nimwegen E."/>
            <person name="Verardo R."/>
            <person name="Wei C.L."/>
            <person name="Yagi K."/>
            <person name="Yamanishi H."/>
            <person name="Zabarovsky E."/>
            <person name="Zhu S."/>
            <person name="Zimmer A."/>
            <person name="Hide W."/>
            <person name="Bult C."/>
            <person name="Grimmond S.M."/>
            <person name="Teasdale R.D."/>
            <person name="Liu E.T."/>
            <person name="Brusic V."/>
            <person name="Quackenbush J."/>
            <person name="Wahlestedt C."/>
            <person name="Mattick J.S."/>
            <person name="Hume D.A."/>
            <person name="Kai C."/>
            <person name="Sasaki D."/>
            <person name="Tomaru Y."/>
            <person name="Fukuda S."/>
            <person name="Kanamori-Katayama M."/>
            <person name="Suzuki M."/>
            <person name="Aoki J."/>
            <person name="Arakawa T."/>
            <person name="Iida J."/>
            <person name="Imamura K."/>
            <person name="Itoh M."/>
            <person name="Kato T."/>
            <person name="Kawaji H."/>
            <person name="Kawagashira N."/>
            <person name="Kawashima T."/>
            <person name="Kojima M."/>
            <person name="Kondo S."/>
            <person name="Konno H."/>
            <person name="Nakano K."/>
            <person name="Ninomiya N."/>
            <person name="Nishio T."/>
            <person name="Okada M."/>
            <person name="Plessy C."/>
            <person name="Shibata K."/>
            <person name="Shiraki T."/>
            <person name="Suzuki S."/>
            <person name="Tagami M."/>
            <person name="Waki K."/>
            <person name="Watahiki A."/>
            <person name="Okamura-Oho Y."/>
            <person name="Suzuki H."/>
            <person name="Kawai J."/>
            <person name="Hayashizaki Y."/>
        </authorList>
    </citation>
    <scope>NUCLEOTIDE SEQUENCE [LARGE SCALE MRNA]</scope>
    <source>
        <strain>C57BL/6J</strain>
        <tissue>Bone marrow</tissue>
    </source>
</reference>
<reference key="3">
    <citation type="journal article" date="2004" name="Genome Res.">
        <title>The status, quality, and expansion of the NIH full-length cDNA project: the Mammalian Gene Collection (MGC).</title>
        <authorList>
            <consortium name="The MGC Project Team"/>
        </authorList>
    </citation>
    <scope>NUCLEOTIDE SEQUENCE [LARGE SCALE MRNA]</scope>
    <source>
        <strain>FVB/N</strain>
        <tissue>Mammary tumor</tissue>
    </source>
</reference>
<reference key="4">
    <citation type="submission" date="2007-07" db="UniProtKB">
        <authorList>
            <person name="Lubec G."/>
            <person name="Yang J.W."/>
            <person name="Zigmond M."/>
        </authorList>
    </citation>
    <scope>PROTEIN SEQUENCE OF 199-208</scope>
    <source>
        <tissue>Brain</tissue>
    </source>
</reference>
<reference key="5">
    <citation type="journal article" date="2010" name="Cell">
        <title>A tissue-specific atlas of mouse protein phosphorylation and expression.</title>
        <authorList>
            <person name="Huttlin E.L."/>
            <person name="Jedrychowski M.P."/>
            <person name="Elias J.E."/>
            <person name="Goswami T."/>
            <person name="Rad R."/>
            <person name="Beausoleil S.A."/>
            <person name="Villen J."/>
            <person name="Haas W."/>
            <person name="Sowa M.E."/>
            <person name="Gygi S.P."/>
        </authorList>
    </citation>
    <scope>IDENTIFICATION BY MASS SPECTROMETRY [LARGE SCALE ANALYSIS]</scope>
    <source>
        <tissue>Brain</tissue>
        <tissue>Brown adipose tissue</tissue>
        <tissue>Heart</tissue>
        <tissue>Kidney</tissue>
        <tissue>Liver</tissue>
        <tissue>Lung</tissue>
        <tissue>Pancreas</tissue>
        <tissue>Spleen</tissue>
        <tissue>Testis</tissue>
    </source>
</reference>
<proteinExistence type="evidence at protein level"/>
<evidence type="ECO:0000250" key="1">
    <source>
        <dbReference type="UniProtKB" id="O00487"/>
    </source>
</evidence>
<evidence type="ECO:0000255" key="2">
    <source>
        <dbReference type="PROSITE-ProRule" id="PRU01182"/>
    </source>
</evidence>
<evidence type="ECO:0000305" key="3"/>
<dbReference type="EC" id="3.4.19.-"/>
<dbReference type="EMBL" id="Y13071">
    <property type="protein sequence ID" value="CAA73514.1"/>
    <property type="molecule type" value="mRNA"/>
</dbReference>
<dbReference type="EMBL" id="AK012013">
    <property type="protein sequence ID" value="BAB27974.1"/>
    <property type="molecule type" value="mRNA"/>
</dbReference>
<dbReference type="EMBL" id="AK151104">
    <property type="protein sequence ID" value="BAE30114.1"/>
    <property type="molecule type" value="mRNA"/>
</dbReference>
<dbReference type="EMBL" id="AK151733">
    <property type="protein sequence ID" value="BAE30648.1"/>
    <property type="molecule type" value="mRNA"/>
</dbReference>
<dbReference type="EMBL" id="BC003742">
    <property type="protein sequence ID" value="AAH03742.1"/>
    <property type="molecule type" value="mRNA"/>
</dbReference>
<dbReference type="CCDS" id="CCDS38127.1"/>
<dbReference type="RefSeq" id="NP_067501.2">
    <property type="nucleotide sequence ID" value="NM_021526.2"/>
</dbReference>
<dbReference type="SMR" id="O35593"/>
<dbReference type="BioGRID" id="208496">
    <property type="interactions" value="64"/>
</dbReference>
<dbReference type="FunCoup" id="O35593">
    <property type="interactions" value="1919"/>
</dbReference>
<dbReference type="IntAct" id="O35593">
    <property type="interactions" value="42"/>
</dbReference>
<dbReference type="MINT" id="O35593"/>
<dbReference type="STRING" id="10090.ENSMUSP00000028278"/>
<dbReference type="MEROPS" id="M67.A11"/>
<dbReference type="GlyGen" id="O35593">
    <property type="glycosylation" value="1 site, 1 O-linked glycan (1 site)"/>
</dbReference>
<dbReference type="iPTMnet" id="O35593"/>
<dbReference type="PhosphoSitePlus" id="O35593"/>
<dbReference type="SwissPalm" id="O35593"/>
<dbReference type="REPRODUCTION-2DPAGE" id="O35593"/>
<dbReference type="jPOST" id="O35593"/>
<dbReference type="PaxDb" id="10090-ENSMUSP00000028278"/>
<dbReference type="PeptideAtlas" id="O35593"/>
<dbReference type="ProteomicsDB" id="291575"/>
<dbReference type="Pumba" id="O35593"/>
<dbReference type="TopDownProteomics" id="O35593"/>
<dbReference type="Antibodypedia" id="1047">
    <property type="antibodies" value="273 antibodies from 35 providers"/>
</dbReference>
<dbReference type="DNASU" id="59029"/>
<dbReference type="Ensembl" id="ENSMUST00000028278.14">
    <property type="protein sequence ID" value="ENSMUSP00000028278.8"/>
    <property type="gene ID" value="ENSMUSG00000026914.16"/>
</dbReference>
<dbReference type="GeneID" id="59029"/>
<dbReference type="KEGG" id="mmu:59029"/>
<dbReference type="UCSC" id="uc008jvc.1">
    <property type="organism name" value="mouse"/>
</dbReference>
<dbReference type="AGR" id="MGI:1913284"/>
<dbReference type="CTD" id="10213"/>
<dbReference type="MGI" id="MGI:1913284">
    <property type="gene designation" value="Psmd14"/>
</dbReference>
<dbReference type="VEuPathDB" id="HostDB:ENSMUSG00000026914"/>
<dbReference type="eggNOG" id="KOG1555">
    <property type="taxonomic scope" value="Eukaryota"/>
</dbReference>
<dbReference type="GeneTree" id="ENSGT00730000111116"/>
<dbReference type="HOGENOM" id="CLU_052991_0_1_1"/>
<dbReference type="InParanoid" id="O35593"/>
<dbReference type="OMA" id="KTGRHEM"/>
<dbReference type="OrthoDB" id="605656at2759"/>
<dbReference type="PhylomeDB" id="O35593"/>
<dbReference type="TreeFam" id="TF105748"/>
<dbReference type="Reactome" id="R-MMU-1169091">
    <property type="pathway name" value="Activation of NF-kappaB in B cells"/>
</dbReference>
<dbReference type="Reactome" id="R-MMU-1234176">
    <property type="pathway name" value="Oxygen-dependent proline hydroxylation of Hypoxia-inducible Factor Alpha"/>
</dbReference>
<dbReference type="Reactome" id="R-MMU-1236978">
    <property type="pathway name" value="Cross-presentation of soluble exogenous antigens (endosomes)"/>
</dbReference>
<dbReference type="Reactome" id="R-MMU-174084">
    <property type="pathway name" value="Autodegradation of Cdh1 by Cdh1:APC/C"/>
</dbReference>
<dbReference type="Reactome" id="R-MMU-174154">
    <property type="pathway name" value="APC/C:Cdc20 mediated degradation of Securin"/>
</dbReference>
<dbReference type="Reactome" id="R-MMU-174178">
    <property type="pathway name" value="APC/C:Cdh1 mediated degradation of Cdc20 and other APC/C:Cdh1 targeted proteins in late mitosis/early G1"/>
</dbReference>
<dbReference type="Reactome" id="R-MMU-174184">
    <property type="pathway name" value="Cdc20:Phospho-APC/C mediated degradation of Cyclin A"/>
</dbReference>
<dbReference type="Reactome" id="R-MMU-187577">
    <property type="pathway name" value="SCF(Skp2)-mediated degradation of p27/p21"/>
</dbReference>
<dbReference type="Reactome" id="R-MMU-195253">
    <property type="pathway name" value="Degradation of beta-catenin by the destruction complex"/>
</dbReference>
<dbReference type="Reactome" id="R-MMU-202424">
    <property type="pathway name" value="Downstream TCR signaling"/>
</dbReference>
<dbReference type="Reactome" id="R-MMU-2467813">
    <property type="pathway name" value="Separation of Sister Chromatids"/>
</dbReference>
<dbReference type="Reactome" id="R-MMU-2871837">
    <property type="pathway name" value="FCERI mediated NF-kB activation"/>
</dbReference>
<dbReference type="Reactome" id="R-MMU-349425">
    <property type="pathway name" value="Autodegradation of the E3 ubiquitin ligase COP1"/>
</dbReference>
<dbReference type="Reactome" id="R-MMU-350562">
    <property type="pathway name" value="Regulation of ornithine decarboxylase (ODC)"/>
</dbReference>
<dbReference type="Reactome" id="R-MMU-382556">
    <property type="pathway name" value="ABC-family proteins mediated transport"/>
</dbReference>
<dbReference type="Reactome" id="R-MMU-450408">
    <property type="pathway name" value="AUF1 (hnRNP D0) binds and destabilizes mRNA"/>
</dbReference>
<dbReference type="Reactome" id="R-MMU-4608870">
    <property type="pathway name" value="Asymmetric localization of PCP proteins"/>
</dbReference>
<dbReference type="Reactome" id="R-MMU-4641257">
    <property type="pathway name" value="Degradation of AXIN"/>
</dbReference>
<dbReference type="Reactome" id="R-MMU-4641258">
    <property type="pathway name" value="Degradation of DVL"/>
</dbReference>
<dbReference type="Reactome" id="R-MMU-5358346">
    <property type="pathway name" value="Hedgehog ligand biogenesis"/>
</dbReference>
<dbReference type="Reactome" id="R-MMU-5607761">
    <property type="pathway name" value="Dectin-1 mediated noncanonical NF-kB signaling"/>
</dbReference>
<dbReference type="Reactome" id="R-MMU-5607764">
    <property type="pathway name" value="CLEC7A (Dectin-1) signaling"/>
</dbReference>
<dbReference type="Reactome" id="R-MMU-5610780">
    <property type="pathway name" value="Degradation of GLI1 by the proteasome"/>
</dbReference>
<dbReference type="Reactome" id="R-MMU-5610785">
    <property type="pathway name" value="GLI3 is processed to GLI3R by the proteasome"/>
</dbReference>
<dbReference type="Reactome" id="R-MMU-5632684">
    <property type="pathway name" value="Hedgehog 'on' state"/>
</dbReference>
<dbReference type="Reactome" id="R-MMU-5658442">
    <property type="pathway name" value="Regulation of RAS by GAPs"/>
</dbReference>
<dbReference type="Reactome" id="R-MMU-5668541">
    <property type="pathway name" value="TNFR2 non-canonical NF-kB pathway"/>
</dbReference>
<dbReference type="Reactome" id="R-MMU-5676590">
    <property type="pathway name" value="NIK--&gt;noncanonical NF-kB signaling"/>
</dbReference>
<dbReference type="Reactome" id="R-MMU-5687128">
    <property type="pathway name" value="MAPK6/MAPK4 signaling"/>
</dbReference>
<dbReference type="Reactome" id="R-MMU-5689603">
    <property type="pathway name" value="UCH proteinases"/>
</dbReference>
<dbReference type="Reactome" id="R-MMU-5689880">
    <property type="pathway name" value="Ub-specific processing proteases"/>
</dbReference>
<dbReference type="Reactome" id="R-MMU-5689901">
    <property type="pathway name" value="Metalloprotease DUBs"/>
</dbReference>
<dbReference type="Reactome" id="R-MMU-6798695">
    <property type="pathway name" value="Neutrophil degranulation"/>
</dbReference>
<dbReference type="Reactome" id="R-MMU-68867">
    <property type="pathway name" value="Assembly of the pre-replicative complex"/>
</dbReference>
<dbReference type="Reactome" id="R-MMU-68949">
    <property type="pathway name" value="Orc1 removal from chromatin"/>
</dbReference>
<dbReference type="Reactome" id="R-MMU-69017">
    <property type="pathway name" value="CDK-mediated phosphorylation and removal of Cdc6"/>
</dbReference>
<dbReference type="Reactome" id="R-MMU-69481">
    <property type="pathway name" value="G2/M Checkpoints"/>
</dbReference>
<dbReference type="Reactome" id="R-MMU-69601">
    <property type="pathway name" value="Ubiquitin Mediated Degradation of Phosphorylated Cdc25A"/>
</dbReference>
<dbReference type="Reactome" id="R-MMU-75815">
    <property type="pathway name" value="Ubiquitin-dependent degradation of Cyclin D"/>
</dbReference>
<dbReference type="Reactome" id="R-MMU-8852276">
    <property type="pathway name" value="The role of GTSE1 in G2/M progression after G2 checkpoint"/>
</dbReference>
<dbReference type="Reactome" id="R-MMU-8854050">
    <property type="pathway name" value="FBXL7 down-regulates AURKA during mitotic entry and in early mitosis"/>
</dbReference>
<dbReference type="Reactome" id="R-MMU-8939236">
    <property type="pathway name" value="RUNX1 regulates transcription of genes involved in differentiation of HSCs"/>
</dbReference>
<dbReference type="Reactome" id="R-MMU-8939902">
    <property type="pathway name" value="Regulation of RUNX2 expression and activity"/>
</dbReference>
<dbReference type="Reactome" id="R-MMU-8941858">
    <property type="pathway name" value="Regulation of RUNX3 expression and activity"/>
</dbReference>
<dbReference type="Reactome" id="R-MMU-8948751">
    <property type="pathway name" value="Regulation of PTEN stability and activity"/>
</dbReference>
<dbReference type="Reactome" id="R-MMU-8951664">
    <property type="pathway name" value="Neddylation"/>
</dbReference>
<dbReference type="Reactome" id="R-MMU-9020702">
    <property type="pathway name" value="Interleukin-1 signaling"/>
</dbReference>
<dbReference type="Reactome" id="R-MMU-9755511">
    <property type="pathway name" value="KEAP1-NFE2L2 pathway"/>
</dbReference>
<dbReference type="Reactome" id="R-MMU-9762114">
    <property type="pathway name" value="GSK3B and BTRC:CUL1-mediated-degradation of NFE2L2"/>
</dbReference>
<dbReference type="Reactome" id="R-MMU-983168">
    <property type="pathway name" value="Antigen processing: Ubiquitination &amp; Proteasome degradation"/>
</dbReference>
<dbReference type="Reactome" id="R-MMU-9907900">
    <property type="pathway name" value="Proteasome assembly"/>
</dbReference>
<dbReference type="BioGRID-ORCS" id="59029">
    <property type="hits" value="28 hits in 116 CRISPR screens"/>
</dbReference>
<dbReference type="CD-CODE" id="CE726F99">
    <property type="entry name" value="Postsynaptic density"/>
</dbReference>
<dbReference type="ChiTaRS" id="Psmd14">
    <property type="organism name" value="mouse"/>
</dbReference>
<dbReference type="PRO" id="PR:O35593"/>
<dbReference type="Proteomes" id="UP000000589">
    <property type="component" value="Chromosome 2"/>
</dbReference>
<dbReference type="RNAct" id="O35593">
    <property type="molecule type" value="protein"/>
</dbReference>
<dbReference type="Bgee" id="ENSMUSG00000026914">
    <property type="expression patterns" value="Expressed in endothelial cell of lymphatic vessel and 268 other cell types or tissues"/>
</dbReference>
<dbReference type="GO" id="GO:0031597">
    <property type="term" value="C:cytosolic proteasome complex"/>
    <property type="evidence" value="ECO:0007669"/>
    <property type="project" value="Ensembl"/>
</dbReference>
<dbReference type="GO" id="GO:0022624">
    <property type="term" value="C:proteasome accessory complex"/>
    <property type="evidence" value="ECO:0000314"/>
    <property type="project" value="UniProtKB"/>
</dbReference>
<dbReference type="GO" id="GO:0000502">
    <property type="term" value="C:proteasome complex"/>
    <property type="evidence" value="ECO:0000314"/>
    <property type="project" value="MGI"/>
</dbReference>
<dbReference type="GO" id="GO:0008541">
    <property type="term" value="C:proteasome regulatory particle, lid subcomplex"/>
    <property type="evidence" value="ECO:0000250"/>
    <property type="project" value="UniProtKB"/>
</dbReference>
<dbReference type="GO" id="GO:0061133">
    <property type="term" value="F:endopeptidase activator activity"/>
    <property type="evidence" value="ECO:0007669"/>
    <property type="project" value="Ensembl"/>
</dbReference>
<dbReference type="GO" id="GO:0004175">
    <property type="term" value="F:endopeptidase activity"/>
    <property type="evidence" value="ECO:0000250"/>
    <property type="project" value="MGI"/>
</dbReference>
<dbReference type="GO" id="GO:0046872">
    <property type="term" value="F:metal ion binding"/>
    <property type="evidence" value="ECO:0007669"/>
    <property type="project" value="UniProtKB-KW"/>
</dbReference>
<dbReference type="GO" id="GO:0140492">
    <property type="term" value="F:metal-dependent deubiquitinase activity"/>
    <property type="evidence" value="ECO:0000250"/>
    <property type="project" value="UniProtKB"/>
</dbReference>
<dbReference type="GO" id="GO:0070628">
    <property type="term" value="F:proteasome binding"/>
    <property type="evidence" value="ECO:0007669"/>
    <property type="project" value="Ensembl"/>
</dbReference>
<dbReference type="GO" id="GO:0000724">
    <property type="term" value="P:double-strand break repair via homologous recombination"/>
    <property type="evidence" value="ECO:0000250"/>
    <property type="project" value="UniProtKB"/>
</dbReference>
<dbReference type="GO" id="GO:0006303">
    <property type="term" value="P:double-strand break repair via nonhomologous end joining"/>
    <property type="evidence" value="ECO:0000250"/>
    <property type="project" value="UniProtKB"/>
</dbReference>
<dbReference type="GO" id="GO:0070536">
    <property type="term" value="P:protein K63-linked deubiquitination"/>
    <property type="evidence" value="ECO:0000250"/>
    <property type="project" value="UniProtKB"/>
</dbReference>
<dbReference type="GO" id="GO:0006508">
    <property type="term" value="P:proteolysis"/>
    <property type="evidence" value="ECO:0007669"/>
    <property type="project" value="UniProtKB-KW"/>
</dbReference>
<dbReference type="GO" id="GO:0061136">
    <property type="term" value="P:regulation of proteasomal protein catabolic process"/>
    <property type="evidence" value="ECO:0007669"/>
    <property type="project" value="Ensembl"/>
</dbReference>
<dbReference type="GO" id="GO:0045471">
    <property type="term" value="P:response to ethanol"/>
    <property type="evidence" value="ECO:0007669"/>
    <property type="project" value="Ensembl"/>
</dbReference>
<dbReference type="CDD" id="cd08069">
    <property type="entry name" value="MPN_RPN11_CSN5"/>
    <property type="match status" value="1"/>
</dbReference>
<dbReference type="FunFam" id="3.40.140.10:FF:000001">
    <property type="entry name" value="26S proteasome non-ATPase regulatory subunit"/>
    <property type="match status" value="1"/>
</dbReference>
<dbReference type="Gene3D" id="3.40.140.10">
    <property type="entry name" value="Cytidine Deaminase, domain 2"/>
    <property type="match status" value="1"/>
</dbReference>
<dbReference type="InterPro" id="IPR000555">
    <property type="entry name" value="JAMM/MPN+_dom"/>
</dbReference>
<dbReference type="InterPro" id="IPR050242">
    <property type="entry name" value="JAMM_MPN+_peptidase_M67A"/>
</dbReference>
<dbReference type="InterPro" id="IPR037518">
    <property type="entry name" value="MPN"/>
</dbReference>
<dbReference type="InterPro" id="IPR056263">
    <property type="entry name" value="RPN11_C"/>
</dbReference>
<dbReference type="PANTHER" id="PTHR10410">
    <property type="entry name" value="EUKARYOTIC TRANSLATION INITIATION FACTOR 3 -RELATED"/>
    <property type="match status" value="1"/>
</dbReference>
<dbReference type="Pfam" id="PF01398">
    <property type="entry name" value="JAB"/>
    <property type="match status" value="1"/>
</dbReference>
<dbReference type="Pfam" id="PF23594">
    <property type="entry name" value="RPN11_C"/>
    <property type="match status" value="1"/>
</dbReference>
<dbReference type="SMART" id="SM00232">
    <property type="entry name" value="JAB_MPN"/>
    <property type="match status" value="1"/>
</dbReference>
<dbReference type="SUPFAM" id="SSF102712">
    <property type="entry name" value="JAB1/MPN domain"/>
    <property type="match status" value="1"/>
</dbReference>
<dbReference type="PROSITE" id="PS50249">
    <property type="entry name" value="MPN"/>
    <property type="match status" value="1"/>
</dbReference>